<dbReference type="EMBL" id="AE001363">
    <property type="protein sequence ID" value="AAD18943.1"/>
    <property type="molecule type" value="Genomic_DNA"/>
</dbReference>
<dbReference type="EMBL" id="AE002161">
    <property type="protein sequence ID" value="AAF38838.1"/>
    <property type="molecule type" value="Genomic_DNA"/>
</dbReference>
<dbReference type="EMBL" id="BA000008">
    <property type="protein sequence ID" value="BAA99013.1"/>
    <property type="molecule type" value="Genomic_DNA"/>
</dbReference>
<dbReference type="EMBL" id="AE009440">
    <property type="protein sequence ID" value="AAP98763.1"/>
    <property type="molecule type" value="Genomic_DNA"/>
</dbReference>
<dbReference type="PIR" id="C86591">
    <property type="entry name" value="C86591"/>
</dbReference>
<dbReference type="PIR" id="F72034">
    <property type="entry name" value="F72034"/>
</dbReference>
<dbReference type="RefSeq" id="NP_225000.1">
    <property type="nucleotide sequence ID" value="NC_000922.1"/>
</dbReference>
<dbReference type="RefSeq" id="WP_010883442.1">
    <property type="nucleotide sequence ID" value="NZ_LN847257.1"/>
</dbReference>
<dbReference type="SMR" id="Q9Z7A1"/>
<dbReference type="STRING" id="406984.CPK_ORF00213"/>
<dbReference type="GeneID" id="45050860"/>
<dbReference type="KEGG" id="cpa:CP_1066"/>
<dbReference type="KEGG" id="cpj:minD"/>
<dbReference type="KEGG" id="cpn:CPn_0805"/>
<dbReference type="KEGG" id="cpt:CpB0834"/>
<dbReference type="PATRIC" id="fig|115713.3.peg.884"/>
<dbReference type="eggNOG" id="COG1192">
    <property type="taxonomic scope" value="Bacteria"/>
</dbReference>
<dbReference type="HOGENOM" id="CLU_037612_1_4_0"/>
<dbReference type="OMA" id="CQFFALK"/>
<dbReference type="OrthoDB" id="9815116at2"/>
<dbReference type="Proteomes" id="UP000000583">
    <property type="component" value="Chromosome"/>
</dbReference>
<dbReference type="Proteomes" id="UP000000801">
    <property type="component" value="Chromosome"/>
</dbReference>
<dbReference type="CDD" id="cd02042">
    <property type="entry name" value="ParAB_family"/>
    <property type="match status" value="1"/>
</dbReference>
<dbReference type="Gene3D" id="3.40.50.300">
    <property type="entry name" value="P-loop containing nucleotide triphosphate hydrolases"/>
    <property type="match status" value="1"/>
</dbReference>
<dbReference type="InterPro" id="IPR025669">
    <property type="entry name" value="AAA_dom"/>
</dbReference>
<dbReference type="InterPro" id="IPR050678">
    <property type="entry name" value="DNA_Partitioning_ATPase"/>
</dbReference>
<dbReference type="InterPro" id="IPR027417">
    <property type="entry name" value="P-loop_NTPase"/>
</dbReference>
<dbReference type="PANTHER" id="PTHR13696">
    <property type="entry name" value="P-LOOP CONTAINING NUCLEOSIDE TRIPHOSPHATE HYDROLASE"/>
    <property type="match status" value="1"/>
</dbReference>
<dbReference type="PANTHER" id="PTHR13696:SF52">
    <property type="entry name" value="PARA FAMILY PROTEIN CT_582"/>
    <property type="match status" value="1"/>
</dbReference>
<dbReference type="Pfam" id="PF13614">
    <property type="entry name" value="AAA_31"/>
    <property type="match status" value="1"/>
</dbReference>
<dbReference type="SUPFAM" id="SSF52540">
    <property type="entry name" value="P-loop containing nucleoside triphosphate hydrolases"/>
    <property type="match status" value="1"/>
</dbReference>
<name>PARA_CHLPN</name>
<protein>
    <recommendedName>
        <fullName>ParA family protein CPn_0805/CP_1066/CPj0805/CpB0834</fullName>
    </recommendedName>
</protein>
<sequence>MKTIAVNSFKGGTAKTSTTLHLGAALAQYHQARVLLIDFDAQANLTSGLGLDPDCYDSLAVVLQGEKEIQEVIRPIQDTQLDLIPADTWLERIEVSGNLAADRYSHERLKYVLGSVQDKYDYVIIDTPPSLCWLTESALIAADYALICATPEFYSVKGLERLAGFIQGISARHPLTILGVALSFWNCRGKNNSAFAELIHKTFPGKLLNTKIRRDITVSEAAIHGKPVFATSPSARASEDYFNLTKELLILLRDI</sequence>
<accession>Q9Z7A1</accession>
<gene>
    <name type="ordered locus">CPn_0805</name>
    <name type="ordered locus">CP_1066</name>
    <name type="ordered locus">CPj0805</name>
    <name type="ordered locus">CpB0834</name>
</gene>
<feature type="chain" id="PRO_0000201984" description="ParA family protein CPn_0805/CP_1066/CPj0805/CpB0834">
    <location>
        <begin position="1"/>
        <end position="255"/>
    </location>
</feature>
<organism>
    <name type="scientific">Chlamydia pneumoniae</name>
    <name type="common">Chlamydophila pneumoniae</name>
    <dbReference type="NCBI Taxonomy" id="83558"/>
    <lineage>
        <taxon>Bacteria</taxon>
        <taxon>Pseudomonadati</taxon>
        <taxon>Chlamydiota</taxon>
        <taxon>Chlamydiia</taxon>
        <taxon>Chlamydiales</taxon>
        <taxon>Chlamydiaceae</taxon>
        <taxon>Chlamydia/Chlamydophila group</taxon>
        <taxon>Chlamydia</taxon>
    </lineage>
</organism>
<reference key="1">
    <citation type="journal article" date="1999" name="Nat. Genet.">
        <title>Comparative genomes of Chlamydia pneumoniae and C. trachomatis.</title>
        <authorList>
            <person name="Kalman S."/>
            <person name="Mitchell W.P."/>
            <person name="Marathe R."/>
            <person name="Lammel C.J."/>
            <person name="Fan J."/>
            <person name="Hyman R.W."/>
            <person name="Olinger L."/>
            <person name="Grimwood J."/>
            <person name="Davis R.W."/>
            <person name="Stephens R.S."/>
        </authorList>
    </citation>
    <scope>NUCLEOTIDE SEQUENCE [LARGE SCALE GENOMIC DNA]</scope>
    <source>
        <strain>CWL029</strain>
    </source>
</reference>
<reference key="2">
    <citation type="journal article" date="2000" name="Nucleic Acids Res.">
        <title>Genome sequences of Chlamydia trachomatis MoPn and Chlamydia pneumoniae AR39.</title>
        <authorList>
            <person name="Read T.D."/>
            <person name="Brunham R.C."/>
            <person name="Shen C."/>
            <person name="Gill S.R."/>
            <person name="Heidelberg J.F."/>
            <person name="White O."/>
            <person name="Hickey E.K."/>
            <person name="Peterson J.D."/>
            <person name="Utterback T.R."/>
            <person name="Berry K.J."/>
            <person name="Bass S."/>
            <person name="Linher K.D."/>
            <person name="Weidman J.F."/>
            <person name="Khouri H.M."/>
            <person name="Craven B."/>
            <person name="Bowman C."/>
            <person name="Dodson R.J."/>
            <person name="Gwinn M.L."/>
            <person name="Nelson W.C."/>
            <person name="DeBoy R.T."/>
            <person name="Kolonay J.F."/>
            <person name="McClarty G."/>
            <person name="Salzberg S.L."/>
            <person name="Eisen J.A."/>
            <person name="Fraser C.M."/>
        </authorList>
    </citation>
    <scope>NUCLEOTIDE SEQUENCE [LARGE SCALE GENOMIC DNA]</scope>
    <source>
        <strain>AR39</strain>
    </source>
</reference>
<reference key="3">
    <citation type="journal article" date="2000" name="Nucleic Acids Res.">
        <title>Comparison of whole genome sequences of Chlamydia pneumoniae J138 from Japan and CWL029 from USA.</title>
        <authorList>
            <person name="Shirai M."/>
            <person name="Hirakawa H."/>
            <person name="Kimoto M."/>
            <person name="Tabuchi M."/>
            <person name="Kishi F."/>
            <person name="Ouchi K."/>
            <person name="Shiba T."/>
            <person name="Ishii K."/>
            <person name="Hattori M."/>
            <person name="Kuhara S."/>
            <person name="Nakazawa T."/>
        </authorList>
    </citation>
    <scope>NUCLEOTIDE SEQUENCE [LARGE SCALE GENOMIC DNA]</scope>
    <source>
        <strain>J138</strain>
    </source>
</reference>
<reference key="4">
    <citation type="submission" date="2002-05" db="EMBL/GenBank/DDBJ databases">
        <title>The genome sequence of Chlamydia pneumoniae TW183 and comparison with other Chlamydia strains based on whole genome sequence analysis.</title>
        <authorList>
            <person name="Geng M.M."/>
            <person name="Schuhmacher A."/>
            <person name="Muehldorfer I."/>
            <person name="Bensch K.W."/>
            <person name="Schaefer K.P."/>
            <person name="Schneider S."/>
            <person name="Pohl T."/>
            <person name="Essig A."/>
            <person name="Marre R."/>
            <person name="Melchers K."/>
        </authorList>
    </citation>
    <scope>NUCLEOTIDE SEQUENCE [LARGE SCALE GENOMIC DNA]</scope>
    <source>
        <strain>TW-183</strain>
    </source>
</reference>
<comment type="similarity">
    <text evidence="1">Belongs to the ParA family.</text>
</comment>
<evidence type="ECO:0000305" key="1"/>
<proteinExistence type="inferred from homology"/>